<proteinExistence type="inferred from homology"/>
<reference key="1">
    <citation type="journal article" date="2009" name="J. Bacteriol.">
        <title>Genome sequence of Azotobacter vinelandii, an obligate aerobe specialized to support diverse anaerobic metabolic processes.</title>
        <authorList>
            <person name="Setubal J.C."/>
            <person name="Dos Santos P."/>
            <person name="Goldman B.S."/>
            <person name="Ertesvaag H."/>
            <person name="Espin G."/>
            <person name="Rubio L.M."/>
            <person name="Valla S."/>
            <person name="Almeida N.F."/>
            <person name="Balasubramanian D."/>
            <person name="Cromes L."/>
            <person name="Curatti L."/>
            <person name="Du Z."/>
            <person name="Godsy E."/>
            <person name="Goodner B."/>
            <person name="Hellner-Burris K."/>
            <person name="Hernandez J.A."/>
            <person name="Houmiel K."/>
            <person name="Imperial J."/>
            <person name="Kennedy C."/>
            <person name="Larson T.J."/>
            <person name="Latreille P."/>
            <person name="Ligon L.S."/>
            <person name="Lu J."/>
            <person name="Maerk M."/>
            <person name="Miller N.M."/>
            <person name="Norton S."/>
            <person name="O'Carroll I.P."/>
            <person name="Paulsen I."/>
            <person name="Raulfs E.C."/>
            <person name="Roemer R."/>
            <person name="Rosser J."/>
            <person name="Segura D."/>
            <person name="Slater S."/>
            <person name="Stricklin S.L."/>
            <person name="Studholme D.J."/>
            <person name="Sun J."/>
            <person name="Viana C.J."/>
            <person name="Wallin E."/>
            <person name="Wang B."/>
            <person name="Wheeler C."/>
            <person name="Zhu H."/>
            <person name="Dean D.R."/>
            <person name="Dixon R."/>
            <person name="Wood D."/>
        </authorList>
    </citation>
    <scope>NUCLEOTIDE SEQUENCE [LARGE SCALE GENOMIC DNA]</scope>
    <source>
        <strain>DJ / ATCC BAA-1303</strain>
    </source>
</reference>
<name>RRAAH_AZOVD</name>
<organism>
    <name type="scientific">Azotobacter vinelandii (strain DJ / ATCC BAA-1303)</name>
    <dbReference type="NCBI Taxonomy" id="322710"/>
    <lineage>
        <taxon>Bacteria</taxon>
        <taxon>Pseudomonadati</taxon>
        <taxon>Pseudomonadota</taxon>
        <taxon>Gammaproteobacteria</taxon>
        <taxon>Pseudomonadales</taxon>
        <taxon>Pseudomonadaceae</taxon>
        <taxon>Azotobacter</taxon>
    </lineage>
</organism>
<comment type="function">
    <text evidence="1">Catalyzes the aldol cleavage of 4-hydroxy-4-methyl-2-oxoglutarate (HMG) into 2 molecules of pyruvate. Also contains a secondary oxaloacetate (OAA) decarboxylase activity due to the common pyruvate enolate transition state formed following C-C bond cleavage in the retro-aldol and decarboxylation reactions (By similarity).</text>
</comment>
<comment type="catalytic activity">
    <reaction>
        <text>4-hydroxy-4-methyl-2-oxoglutarate = 2 pyruvate</text>
        <dbReference type="Rhea" id="RHEA:22748"/>
        <dbReference type="ChEBI" id="CHEBI:15361"/>
        <dbReference type="ChEBI" id="CHEBI:58276"/>
        <dbReference type="EC" id="4.1.3.17"/>
    </reaction>
</comment>
<comment type="catalytic activity">
    <reaction>
        <text>oxaloacetate + H(+) = pyruvate + CO2</text>
        <dbReference type="Rhea" id="RHEA:15641"/>
        <dbReference type="ChEBI" id="CHEBI:15361"/>
        <dbReference type="ChEBI" id="CHEBI:15378"/>
        <dbReference type="ChEBI" id="CHEBI:16452"/>
        <dbReference type="ChEBI" id="CHEBI:16526"/>
        <dbReference type="EC" id="4.1.1.112"/>
    </reaction>
</comment>
<comment type="cofactor">
    <cofactor evidence="1">
        <name>a divalent metal cation</name>
        <dbReference type="ChEBI" id="CHEBI:60240"/>
    </cofactor>
    <text evidence="1">Divalent metal cation.</text>
</comment>
<comment type="subunit">
    <text evidence="1">Homotrimer.</text>
</comment>
<comment type="similarity">
    <text evidence="2">Belongs to the class II aldolase/RraA-like family.</text>
</comment>
<gene>
    <name type="ordered locus">Avin_23290</name>
</gene>
<sequence length="162" mass="17496">MQYVTPDLCDAYPELVQVVEPMFSNFGGRDSFGGEIVTIKCFEDNSLVKDQVDTDGKGKVLVVDGGGSLRRALLGDMLAEKAARNGWEGLVVYGCIRDVDVIAQTDLGVQALATHPMKTDKRGIGDLNVPVTFGGVTFRPGEYLYADNNGIIVSPQPLKMPE</sequence>
<accession>C1DHC2</accession>
<protein>
    <recommendedName>
        <fullName>Putative 4-hydroxy-4-methyl-2-oxoglutarate aldolase</fullName>
        <shortName>HMG aldolase</shortName>
        <ecNumber>4.1.3.17</ecNumber>
    </recommendedName>
    <alternativeName>
        <fullName>Oxaloacetate decarboxylase</fullName>
        <shortName>OAA decarboxylase</shortName>
        <ecNumber>4.1.1.112</ecNumber>
    </alternativeName>
    <alternativeName>
        <fullName>Regulator of ribonuclease activity homolog</fullName>
    </alternativeName>
    <alternativeName>
        <fullName>RraA-like protein</fullName>
    </alternativeName>
</protein>
<evidence type="ECO:0000250" key="1"/>
<evidence type="ECO:0000305" key="2"/>
<keyword id="KW-0456">Lyase</keyword>
<keyword id="KW-0479">Metal-binding</keyword>
<feature type="chain" id="PRO_1000206348" description="Putative 4-hydroxy-4-methyl-2-oxoglutarate aldolase">
    <location>
        <begin position="1"/>
        <end position="162"/>
    </location>
</feature>
<feature type="binding site" evidence="1">
    <location>
        <begin position="75"/>
        <end position="78"/>
    </location>
    <ligand>
        <name>substrate</name>
    </ligand>
</feature>
<feature type="binding site" evidence="1">
    <location>
        <position position="97"/>
    </location>
    <ligand>
        <name>substrate</name>
    </ligand>
</feature>
<feature type="binding site" evidence="1">
    <location>
        <position position="98"/>
    </location>
    <ligand>
        <name>a divalent metal cation</name>
        <dbReference type="ChEBI" id="CHEBI:60240"/>
    </ligand>
</feature>
<dbReference type="EC" id="4.1.3.17"/>
<dbReference type="EC" id="4.1.1.112"/>
<dbReference type="EMBL" id="CP001157">
    <property type="protein sequence ID" value="ACO78517.1"/>
    <property type="molecule type" value="Genomic_DNA"/>
</dbReference>
<dbReference type="RefSeq" id="WP_012700915.1">
    <property type="nucleotide sequence ID" value="NC_012560.1"/>
</dbReference>
<dbReference type="SMR" id="C1DHC2"/>
<dbReference type="STRING" id="322710.Avin_23290"/>
<dbReference type="EnsemblBacteria" id="ACO78517">
    <property type="protein sequence ID" value="ACO78517"/>
    <property type="gene ID" value="Avin_23290"/>
</dbReference>
<dbReference type="GeneID" id="88185513"/>
<dbReference type="KEGG" id="avn:Avin_23290"/>
<dbReference type="eggNOG" id="COG0684">
    <property type="taxonomic scope" value="Bacteria"/>
</dbReference>
<dbReference type="HOGENOM" id="CLU_072626_4_0_6"/>
<dbReference type="OrthoDB" id="943692at2"/>
<dbReference type="Proteomes" id="UP000002424">
    <property type="component" value="Chromosome"/>
</dbReference>
<dbReference type="GO" id="GO:0047443">
    <property type="term" value="F:4-hydroxy-4-methyl-2-oxoglutarate aldolase activity"/>
    <property type="evidence" value="ECO:0007669"/>
    <property type="project" value="UniProtKB-EC"/>
</dbReference>
<dbReference type="GO" id="GO:0046872">
    <property type="term" value="F:metal ion binding"/>
    <property type="evidence" value="ECO:0007669"/>
    <property type="project" value="UniProtKB-KW"/>
</dbReference>
<dbReference type="GO" id="GO:0008948">
    <property type="term" value="F:oxaloacetate decarboxylase activity"/>
    <property type="evidence" value="ECO:0007669"/>
    <property type="project" value="UniProtKB-EC"/>
</dbReference>
<dbReference type="GO" id="GO:0008428">
    <property type="term" value="F:ribonuclease inhibitor activity"/>
    <property type="evidence" value="ECO:0007669"/>
    <property type="project" value="InterPro"/>
</dbReference>
<dbReference type="GO" id="GO:0051252">
    <property type="term" value="P:regulation of RNA metabolic process"/>
    <property type="evidence" value="ECO:0007669"/>
    <property type="project" value="InterPro"/>
</dbReference>
<dbReference type="CDD" id="cd16841">
    <property type="entry name" value="RraA_family"/>
    <property type="match status" value="1"/>
</dbReference>
<dbReference type="Gene3D" id="3.50.30.40">
    <property type="entry name" value="Ribonuclease E inhibitor RraA/RraA-like"/>
    <property type="match status" value="1"/>
</dbReference>
<dbReference type="InterPro" id="IPR010203">
    <property type="entry name" value="RraA"/>
</dbReference>
<dbReference type="InterPro" id="IPR005493">
    <property type="entry name" value="RraA/RraA-like"/>
</dbReference>
<dbReference type="InterPro" id="IPR036704">
    <property type="entry name" value="RraA/RraA-like_sf"/>
</dbReference>
<dbReference type="NCBIfam" id="TIGR01935">
    <property type="entry name" value="NOT-MenG"/>
    <property type="match status" value="1"/>
</dbReference>
<dbReference type="NCBIfam" id="NF006875">
    <property type="entry name" value="PRK09372.1"/>
    <property type="match status" value="1"/>
</dbReference>
<dbReference type="NCBIfam" id="NF009134">
    <property type="entry name" value="PRK12487.1"/>
    <property type="match status" value="1"/>
</dbReference>
<dbReference type="PANTHER" id="PTHR33254">
    <property type="entry name" value="4-HYDROXY-4-METHYL-2-OXOGLUTARATE ALDOLASE 3-RELATED"/>
    <property type="match status" value="1"/>
</dbReference>
<dbReference type="PANTHER" id="PTHR33254:SF29">
    <property type="entry name" value="REGULATOR OF RIBONUCLEASE ACTIVITY A"/>
    <property type="match status" value="1"/>
</dbReference>
<dbReference type="Pfam" id="PF03737">
    <property type="entry name" value="RraA-like"/>
    <property type="match status" value="1"/>
</dbReference>
<dbReference type="SUPFAM" id="SSF89562">
    <property type="entry name" value="RraA-like"/>
    <property type="match status" value="1"/>
</dbReference>